<gene>
    <name evidence="1" type="primary">ribH</name>
    <name type="synonym">ribE</name>
    <name type="ordered locus">Z0516</name>
    <name type="ordered locus">ECs0468</name>
</gene>
<name>RISB_ECO57</name>
<sequence length="156" mass="16157">MNIIEANVATPDARVAITIARFNNFINDSLLEGAIDALKRIGQVKDENITVVWVPGAYELPLAAGALAKTGKYDAVIALGTVIRGGTAHFEYVAGGASNGLAHVAQDSEIPVAFGVLTTESIEQAIERAGTKAGNKGAEAALTALEMINVLKAIKA</sequence>
<keyword id="KW-1185">Reference proteome</keyword>
<keyword id="KW-0686">Riboflavin biosynthesis</keyword>
<keyword id="KW-0808">Transferase</keyword>
<dbReference type="EC" id="2.5.1.78" evidence="1"/>
<dbReference type="EMBL" id="AE005174">
    <property type="protein sequence ID" value="AAG54764.1"/>
    <property type="molecule type" value="Genomic_DNA"/>
</dbReference>
<dbReference type="EMBL" id="BA000007">
    <property type="protein sequence ID" value="BAB33891.1"/>
    <property type="molecule type" value="Genomic_DNA"/>
</dbReference>
<dbReference type="PIR" id="D90687">
    <property type="entry name" value="D90687"/>
</dbReference>
<dbReference type="PIR" id="H85537">
    <property type="entry name" value="H85537"/>
</dbReference>
<dbReference type="RefSeq" id="NP_308495.1">
    <property type="nucleotide sequence ID" value="NC_002695.1"/>
</dbReference>
<dbReference type="RefSeq" id="WP_001021161.1">
    <property type="nucleotide sequence ID" value="NZ_VOAI01000005.1"/>
</dbReference>
<dbReference type="SMR" id="P61717"/>
<dbReference type="STRING" id="155864.Z0516"/>
<dbReference type="GeneID" id="914570"/>
<dbReference type="GeneID" id="98391920"/>
<dbReference type="KEGG" id="ece:Z0516"/>
<dbReference type="KEGG" id="ecs:ECs_0468"/>
<dbReference type="PATRIC" id="fig|386585.9.peg.568"/>
<dbReference type="eggNOG" id="COG0054">
    <property type="taxonomic scope" value="Bacteria"/>
</dbReference>
<dbReference type="HOGENOM" id="CLU_089358_1_1_6"/>
<dbReference type="OMA" id="CQGVTQG"/>
<dbReference type="UniPathway" id="UPA00275">
    <property type="reaction ID" value="UER00404"/>
</dbReference>
<dbReference type="Proteomes" id="UP000000558">
    <property type="component" value="Chromosome"/>
</dbReference>
<dbReference type="Proteomes" id="UP000002519">
    <property type="component" value="Chromosome"/>
</dbReference>
<dbReference type="GO" id="GO:0005829">
    <property type="term" value="C:cytosol"/>
    <property type="evidence" value="ECO:0007669"/>
    <property type="project" value="TreeGrafter"/>
</dbReference>
<dbReference type="GO" id="GO:0009349">
    <property type="term" value="C:riboflavin synthase complex"/>
    <property type="evidence" value="ECO:0007669"/>
    <property type="project" value="InterPro"/>
</dbReference>
<dbReference type="GO" id="GO:0000906">
    <property type="term" value="F:6,7-dimethyl-8-ribityllumazine synthase activity"/>
    <property type="evidence" value="ECO:0007669"/>
    <property type="project" value="UniProtKB-UniRule"/>
</dbReference>
<dbReference type="GO" id="GO:0009231">
    <property type="term" value="P:riboflavin biosynthetic process"/>
    <property type="evidence" value="ECO:0007669"/>
    <property type="project" value="UniProtKB-UniRule"/>
</dbReference>
<dbReference type="CDD" id="cd09209">
    <property type="entry name" value="Lumazine_synthase-I"/>
    <property type="match status" value="1"/>
</dbReference>
<dbReference type="FunFam" id="3.40.50.960:FF:000001">
    <property type="entry name" value="6,7-dimethyl-8-ribityllumazine synthase"/>
    <property type="match status" value="1"/>
</dbReference>
<dbReference type="Gene3D" id="3.40.50.960">
    <property type="entry name" value="Lumazine/riboflavin synthase"/>
    <property type="match status" value="1"/>
</dbReference>
<dbReference type="HAMAP" id="MF_00178">
    <property type="entry name" value="Lumazine_synth"/>
    <property type="match status" value="1"/>
</dbReference>
<dbReference type="InterPro" id="IPR034964">
    <property type="entry name" value="LS"/>
</dbReference>
<dbReference type="InterPro" id="IPR002180">
    <property type="entry name" value="LS/RS"/>
</dbReference>
<dbReference type="InterPro" id="IPR036467">
    <property type="entry name" value="LS/RS_sf"/>
</dbReference>
<dbReference type="NCBIfam" id="TIGR00114">
    <property type="entry name" value="lumazine-synth"/>
    <property type="match status" value="1"/>
</dbReference>
<dbReference type="NCBIfam" id="NF000812">
    <property type="entry name" value="PRK00061.1-4"/>
    <property type="match status" value="1"/>
</dbReference>
<dbReference type="PANTHER" id="PTHR21058:SF0">
    <property type="entry name" value="6,7-DIMETHYL-8-RIBITYLLUMAZINE SYNTHASE"/>
    <property type="match status" value="1"/>
</dbReference>
<dbReference type="PANTHER" id="PTHR21058">
    <property type="entry name" value="6,7-DIMETHYL-8-RIBITYLLUMAZINE SYNTHASE DMRL SYNTHASE LUMAZINE SYNTHASE"/>
    <property type="match status" value="1"/>
</dbReference>
<dbReference type="Pfam" id="PF00885">
    <property type="entry name" value="DMRL_synthase"/>
    <property type="match status" value="1"/>
</dbReference>
<dbReference type="SUPFAM" id="SSF52121">
    <property type="entry name" value="Lumazine synthase"/>
    <property type="match status" value="1"/>
</dbReference>
<accession>P61717</accession>
<accession>P25540</accession>
<accession>P77114</accession>
<proteinExistence type="inferred from homology"/>
<comment type="function">
    <text evidence="1">Catalyzes the formation of 6,7-dimethyl-8-ribityllumazine by condensation of 5-amino-6-(D-ribitylamino)uracil with 3,4-dihydroxy-2-butanone 4-phosphate. This is the penultimate step in the biosynthesis of riboflavin.</text>
</comment>
<comment type="catalytic activity">
    <reaction evidence="1">
        <text>(2S)-2-hydroxy-3-oxobutyl phosphate + 5-amino-6-(D-ribitylamino)uracil = 6,7-dimethyl-8-(1-D-ribityl)lumazine + phosphate + 2 H2O + H(+)</text>
        <dbReference type="Rhea" id="RHEA:26152"/>
        <dbReference type="ChEBI" id="CHEBI:15377"/>
        <dbReference type="ChEBI" id="CHEBI:15378"/>
        <dbReference type="ChEBI" id="CHEBI:15934"/>
        <dbReference type="ChEBI" id="CHEBI:43474"/>
        <dbReference type="ChEBI" id="CHEBI:58201"/>
        <dbReference type="ChEBI" id="CHEBI:58830"/>
        <dbReference type="EC" id="2.5.1.78"/>
    </reaction>
</comment>
<comment type="pathway">
    <text evidence="1">Cofactor biosynthesis; riboflavin biosynthesis; riboflavin from 2-hydroxy-3-oxobutyl phosphate and 5-amino-6-(D-ribitylamino)uracil: step 1/2.</text>
</comment>
<comment type="subunit">
    <text evidence="1">Forms an icosahedral capsid composed of 60 subunits, arranged as a dodecamer of pentamers.</text>
</comment>
<comment type="similarity">
    <text evidence="1">Belongs to the DMRL synthase family.</text>
</comment>
<feature type="chain" id="PRO_0000134756" description="6,7-dimethyl-8-ribityllumazine synthase">
    <location>
        <begin position="1"/>
        <end position="156"/>
    </location>
</feature>
<feature type="active site" description="Proton donor" evidence="1">
    <location>
        <position position="89"/>
    </location>
</feature>
<feature type="binding site" evidence="1">
    <location>
        <position position="22"/>
    </location>
    <ligand>
        <name>5-amino-6-(D-ribitylamino)uracil</name>
        <dbReference type="ChEBI" id="CHEBI:15934"/>
    </ligand>
</feature>
<feature type="binding site" evidence="1">
    <location>
        <begin position="57"/>
        <end position="59"/>
    </location>
    <ligand>
        <name>5-amino-6-(D-ribitylamino)uracil</name>
        <dbReference type="ChEBI" id="CHEBI:15934"/>
    </ligand>
</feature>
<feature type="binding site" evidence="1">
    <location>
        <begin position="81"/>
        <end position="83"/>
    </location>
    <ligand>
        <name>5-amino-6-(D-ribitylamino)uracil</name>
        <dbReference type="ChEBI" id="CHEBI:15934"/>
    </ligand>
</feature>
<feature type="binding site" evidence="1">
    <location>
        <begin position="86"/>
        <end position="87"/>
    </location>
    <ligand>
        <name>(2S)-2-hydroxy-3-oxobutyl phosphate</name>
        <dbReference type="ChEBI" id="CHEBI:58830"/>
    </ligand>
</feature>
<feature type="binding site" evidence="1">
    <location>
        <position position="114"/>
    </location>
    <ligand>
        <name>5-amino-6-(D-ribitylamino)uracil</name>
        <dbReference type="ChEBI" id="CHEBI:15934"/>
    </ligand>
</feature>
<feature type="binding site" evidence="1">
    <location>
        <position position="128"/>
    </location>
    <ligand>
        <name>(2S)-2-hydroxy-3-oxobutyl phosphate</name>
        <dbReference type="ChEBI" id="CHEBI:58830"/>
    </ligand>
</feature>
<evidence type="ECO:0000255" key="1">
    <source>
        <dbReference type="HAMAP-Rule" id="MF_00178"/>
    </source>
</evidence>
<reference key="1">
    <citation type="journal article" date="2001" name="Nature">
        <title>Genome sequence of enterohaemorrhagic Escherichia coli O157:H7.</title>
        <authorList>
            <person name="Perna N.T."/>
            <person name="Plunkett G. III"/>
            <person name="Burland V."/>
            <person name="Mau B."/>
            <person name="Glasner J.D."/>
            <person name="Rose D.J."/>
            <person name="Mayhew G.F."/>
            <person name="Evans P.S."/>
            <person name="Gregor J."/>
            <person name="Kirkpatrick H.A."/>
            <person name="Posfai G."/>
            <person name="Hackett J."/>
            <person name="Klink S."/>
            <person name="Boutin A."/>
            <person name="Shao Y."/>
            <person name="Miller L."/>
            <person name="Grotbeck E.J."/>
            <person name="Davis N.W."/>
            <person name="Lim A."/>
            <person name="Dimalanta E.T."/>
            <person name="Potamousis K."/>
            <person name="Apodaca J."/>
            <person name="Anantharaman T.S."/>
            <person name="Lin J."/>
            <person name="Yen G."/>
            <person name="Schwartz D.C."/>
            <person name="Welch R.A."/>
            <person name="Blattner F.R."/>
        </authorList>
    </citation>
    <scope>NUCLEOTIDE SEQUENCE [LARGE SCALE GENOMIC DNA]</scope>
    <source>
        <strain>O157:H7 / EDL933 / ATCC 700927 / EHEC</strain>
    </source>
</reference>
<reference key="2">
    <citation type="journal article" date="2001" name="DNA Res.">
        <title>Complete genome sequence of enterohemorrhagic Escherichia coli O157:H7 and genomic comparison with a laboratory strain K-12.</title>
        <authorList>
            <person name="Hayashi T."/>
            <person name="Makino K."/>
            <person name="Ohnishi M."/>
            <person name="Kurokawa K."/>
            <person name="Ishii K."/>
            <person name="Yokoyama K."/>
            <person name="Han C.-G."/>
            <person name="Ohtsubo E."/>
            <person name="Nakayama K."/>
            <person name="Murata T."/>
            <person name="Tanaka M."/>
            <person name="Tobe T."/>
            <person name="Iida T."/>
            <person name="Takami H."/>
            <person name="Honda T."/>
            <person name="Sasakawa C."/>
            <person name="Ogasawara N."/>
            <person name="Yasunaga T."/>
            <person name="Kuhara S."/>
            <person name="Shiba T."/>
            <person name="Hattori M."/>
            <person name="Shinagawa H."/>
        </authorList>
    </citation>
    <scope>NUCLEOTIDE SEQUENCE [LARGE SCALE GENOMIC DNA]</scope>
    <source>
        <strain>O157:H7 / Sakai / RIMD 0509952 / EHEC</strain>
    </source>
</reference>
<protein>
    <recommendedName>
        <fullName evidence="1">6,7-dimethyl-8-ribityllumazine synthase</fullName>
        <shortName evidence="1">DMRL synthase</shortName>
        <shortName evidence="1">LS</shortName>
        <shortName evidence="1">Lumazine synthase</shortName>
        <ecNumber evidence="1">2.5.1.78</ecNumber>
    </recommendedName>
</protein>
<organism>
    <name type="scientific">Escherichia coli O157:H7</name>
    <dbReference type="NCBI Taxonomy" id="83334"/>
    <lineage>
        <taxon>Bacteria</taxon>
        <taxon>Pseudomonadati</taxon>
        <taxon>Pseudomonadota</taxon>
        <taxon>Gammaproteobacteria</taxon>
        <taxon>Enterobacterales</taxon>
        <taxon>Enterobacteriaceae</taxon>
        <taxon>Escherichia</taxon>
    </lineage>
</organism>